<organism>
    <name type="scientific">Bacillus sp. (strain NEB-606)</name>
    <dbReference type="NCBI Taxonomy" id="114630"/>
    <lineage>
        <taxon>Bacteria</taxon>
        <taxon>Bacillati</taxon>
        <taxon>Bacillota</taxon>
        <taxon>Bacilli</taxon>
        <taxon>Bacillales</taxon>
        <taxon>Bacillaceae</taxon>
        <taxon>Bacillus</taxon>
    </lineage>
</organism>
<sequence length="225" mass="25605">MERQLKSIAYAFVANDIDVYIPDGESNCIVVTKLVCKDCGQYWHTSLSECYFCGTLNFYLYECNSCGKKYSLTSSSKSCDTDGCNGKLIKRCSNPECISRTNEEIQRATDEQGGVFDLNSSFNVSLNHCVTCGSKENYYKTYRIYSYRTEVEPNIEALREFANNNKLNSDEDVIIIKHLVDNVIHYGYIPYSKLDETTEITTTFSRFSDLVSELFPVNVPPNVTE</sequence>
<comment type="function">
    <text evidence="1 4">A P subtype restriction enzyme that recognizes the double-stranded sequence 5'-CCN(7)GG-3' and cleaves after N-7.</text>
</comment>
<comment type="catalytic activity">
    <reaction evidence="1">
        <text>Endonucleolytic cleavage of DNA to give specific double-stranded fragments with terminal 5'-phosphates.</text>
        <dbReference type="EC" id="3.1.21.4"/>
    </reaction>
</comment>
<comment type="cofactor">
    <cofactor>
        <name>Zn(2+)</name>
        <dbReference type="ChEBI" id="CHEBI:29105"/>
    </cofactor>
    <text evidence="2">Binds 2 Zn(2+) ions per subunit.</text>
</comment>
<comment type="biophysicochemical properties">
    <temperatureDependence>
        <text>Is one of the thermostable restriction enzymes that remain active after 20 to 30 cycles of thermal PCR cycling.</text>
    </temperatureDependence>
</comment>
<comment type="subunit">
    <text evidence="1">Heterotetramer of two alpha and two beta subunits. The alpha subunit is believed to be responsible for DNA recognition, while the beta subunit is thought to mediate cleavage.</text>
</comment>
<comment type="domain">
    <text>One of the zinc-binding motifs may participate in protein-DNA interactions and the other might mediate protein-protein interactions.</text>
</comment>
<comment type="biotechnology">
    <text>Could be used to screen carcinogenic mutations in a restriction endonuclease-mediated selective PCR (or REMS-PCR) assay. In particular, could be used to detect the vast majority of mutations that occur at codons 12 or 13 of the Ras oncogenes that encode glycine (codons GGN) at those positions.</text>
</comment>
<reference key="1">
    <citation type="journal article" date="2000" name="J. Bacteriol.">
        <title>Cloning, expression, and purification of a thermostable nonhomodimeric restriction enzyme, BslI.</title>
        <authorList>
            <person name="Hsieh P.-C."/>
            <person name="Xiao J.-P."/>
            <person name="O'Loane D."/>
            <person name="Xu S.-Y."/>
        </authorList>
    </citation>
    <scope>NUCLEOTIDE SEQUENCE [GENOMIC DNA]</scope>
    <scope>PROTEIN SEQUENCE OF N-TERMINUS</scope>
    <scope>FUNCTION</scope>
    <scope>SUBUNIT</scope>
    <scope>MUTAGENESIS OF CYS-53</scope>
</reference>
<reference key="2">
    <citation type="journal article" date="2003" name="J. Mol. Biol.">
        <title>Glucocorticoid receptor-like Zn(Cys)4 motifs in BslI restriction endonuclease.</title>
        <authorList>
            <person name="Scheuring Vanamee E."/>
            <person name="Hsieh P.-C."/>
            <person name="Zhu Z."/>
            <person name="Yates D."/>
            <person name="Garman E."/>
            <person name="Xu S.-Y."/>
            <person name="Aggarwal A.K."/>
        </authorList>
    </citation>
    <scope>ZINC-BINDING</scope>
    <scope>ABSORPTION SPECTROSCOPY</scope>
    <scope>MUTAGENESIS OF CYS-36; CYS-39; CYS-50; CYS-53; CYS-63; CYS-66; CYS-79 AND CYS-84</scope>
</reference>
<reference key="3">
    <citation type="journal article" date="2003" name="Nucleic Acids Res.">
        <title>A nomenclature for restriction enzymes, DNA methyltransferases, homing endonucleases and their genes.</title>
        <authorList>
            <person name="Roberts R.J."/>
            <person name="Belfort M."/>
            <person name="Bestor T."/>
            <person name="Bhagwat A.S."/>
            <person name="Bickle T.A."/>
            <person name="Bitinaite J."/>
            <person name="Blumenthal R.M."/>
            <person name="Degtyarev S.K."/>
            <person name="Dryden D.T."/>
            <person name="Dybvig K."/>
            <person name="Firman K."/>
            <person name="Gromova E.S."/>
            <person name="Gumport R.I."/>
            <person name="Halford S.E."/>
            <person name="Hattman S."/>
            <person name="Heitman J."/>
            <person name="Hornby D.P."/>
            <person name="Janulaitis A."/>
            <person name="Jeltsch A."/>
            <person name="Josephsen J."/>
            <person name="Kiss A."/>
            <person name="Klaenhammer T.R."/>
            <person name="Kobayashi I."/>
            <person name="Kong H."/>
            <person name="Krueger D.H."/>
            <person name="Lacks S."/>
            <person name="Marinus M.G."/>
            <person name="Miyahara M."/>
            <person name="Morgan R.D."/>
            <person name="Murray N.E."/>
            <person name="Nagaraja V."/>
            <person name="Piekarowicz A."/>
            <person name="Pingoud A."/>
            <person name="Raleigh E."/>
            <person name="Rao D.N."/>
            <person name="Reich N."/>
            <person name="Repin V.E."/>
            <person name="Selker E.U."/>
            <person name="Shaw P.C."/>
            <person name="Stein D.C."/>
            <person name="Stoddard B.L."/>
            <person name="Szybalski W."/>
            <person name="Trautner T.A."/>
            <person name="Van Etten J.L."/>
            <person name="Vitor J.M."/>
            <person name="Wilson G.G."/>
            <person name="Xu S.Y."/>
        </authorList>
    </citation>
    <scope>NOMENCLATURE</scope>
    <scope>SUBTYPE</scope>
</reference>
<proteinExistence type="evidence at protein level"/>
<name>T2BLA_BACSQ</name>
<protein>
    <recommendedName>
        <fullName evidence="4">Type II restriction enzyme BslI subunit alpha</fullName>
        <shortName>R.BslIalpha</shortName>
        <ecNumber evidence="1">3.1.21.4</ecNumber>
    </recommendedName>
    <alternativeName>
        <fullName>Endonuclease BslI subunit alpha</fullName>
    </alternativeName>
    <alternativeName>
        <fullName>Type IIT restriction enzyme BslI subunit alpha</fullName>
    </alternativeName>
    <alternativeName>
        <fullName>Type-2 restriction enzyme BslI subunit alpha</fullName>
    </alternativeName>
</protein>
<gene>
    <name evidence="3" type="primary">bslIRalpha</name>
</gene>
<evidence type="ECO:0000269" key="1">
    <source>
    </source>
</evidence>
<evidence type="ECO:0000269" key="2">
    <source>
    </source>
</evidence>
<evidence type="ECO:0000303" key="3">
    <source>
    </source>
</evidence>
<evidence type="ECO:0000303" key="4">
    <source>
    </source>
</evidence>
<feature type="chain" id="PRO_0000077283" description="Type II restriction enzyme BslI subunit alpha">
    <location>
        <begin position="1"/>
        <end position="225"/>
    </location>
</feature>
<feature type="zinc finger region" description="C4-type 1">
    <location>
        <begin position="36"/>
        <end position="53"/>
    </location>
</feature>
<feature type="zinc finger region" description="C4-type 2">
    <location>
        <begin position="63"/>
        <end position="84"/>
    </location>
</feature>
<feature type="mutagenesis site" description="10% of wild-type activity." evidence="2">
    <original>C</original>
    <variation>A</variation>
    <location>
        <position position="36"/>
    </location>
</feature>
<feature type="mutagenesis site" description="10% of wild-type activity." evidence="2">
    <original>C</original>
    <variation>A</variation>
    <location>
        <position position="39"/>
    </location>
</feature>
<feature type="mutagenesis site" description="Loss of activity." evidence="2">
    <original>C</original>
    <variation>A</variation>
    <location>
        <position position="50"/>
    </location>
</feature>
<feature type="mutagenesis site" description="10% of wild-type activity." evidence="1">
    <original>C</original>
    <variation>A</variation>
    <location>
        <position position="53"/>
    </location>
</feature>
<feature type="mutagenesis site" description="Loss of activity." evidence="1">
    <original>C</original>
    <variation>R</variation>
    <location>
        <position position="53"/>
    </location>
</feature>
<feature type="mutagenesis site" description="Loss of activity." evidence="2">
    <original>C</original>
    <variation>A</variation>
    <location>
        <position position="63"/>
    </location>
</feature>
<feature type="mutagenesis site" description="50% of wild-type activity." evidence="2">
    <original>C</original>
    <variation>A</variation>
    <location>
        <position position="66"/>
    </location>
</feature>
<feature type="mutagenesis site" description="50% of wild-type activity." evidence="2">
    <original>C</original>
    <variation>A</variation>
    <location>
        <position position="79"/>
    </location>
</feature>
<feature type="mutagenesis site" description="50% of wild-type activity." evidence="2">
    <original>C</original>
    <variation>A</variation>
    <location>
        <position position="84"/>
    </location>
</feature>
<keyword id="KW-0903">Direct protein sequencing</keyword>
<keyword id="KW-0255">Endonuclease</keyword>
<keyword id="KW-0378">Hydrolase</keyword>
<keyword id="KW-0479">Metal-binding</keyword>
<keyword id="KW-0540">Nuclease</keyword>
<keyword id="KW-0677">Repeat</keyword>
<keyword id="KW-0680">Restriction system</keyword>
<keyword id="KW-0862">Zinc</keyword>
<keyword id="KW-0863">Zinc-finger</keyword>
<dbReference type="EC" id="3.1.21.4" evidence="1"/>
<dbReference type="EMBL" id="AF135191">
    <property type="protein sequence ID" value="AAF32530.1"/>
    <property type="molecule type" value="Genomic_DNA"/>
</dbReference>
<dbReference type="REBASE" id="386">
    <property type="entry name" value="BslI"/>
</dbReference>
<dbReference type="PRO" id="PR:Q9LAI1"/>
<dbReference type="GO" id="GO:0009036">
    <property type="term" value="F:type II site-specific deoxyribonuclease activity"/>
    <property type="evidence" value="ECO:0007669"/>
    <property type="project" value="UniProtKB-EC"/>
</dbReference>
<dbReference type="GO" id="GO:0008270">
    <property type="term" value="F:zinc ion binding"/>
    <property type="evidence" value="ECO:0007669"/>
    <property type="project" value="UniProtKB-KW"/>
</dbReference>
<dbReference type="GO" id="GO:0009307">
    <property type="term" value="P:DNA restriction-modification system"/>
    <property type="evidence" value="ECO:0007669"/>
    <property type="project" value="UniProtKB-KW"/>
</dbReference>
<accession>Q9LAI1</accession>